<sequence length="274" mass="29631">MRKIAIYGKGGIGKSTTTQNTVAGLSEMGKKIMVVGCDPKADSTRLLLGGLAQRTVLDTLREEGEDVELDDVRKVGYAGTLCTESGGPEPGVGCAGRGIITSINLLEQLGAYADSEELDYAFYDVLGDVVCGGFAMPIREGKAQEIYIVVSGEMMAMYAANNISKGIVKFAEAGGVRLGGLICNSRNVDNEREMIEAFAAKLGTQMIHFVPRDNMVQRAEINRKTVIEFDPAHSQADEYRTLARKIDANEMRVIPSPLEIEELEKLLIDYGIAA</sequence>
<gene>
    <name evidence="1" type="primary">nifH</name>
    <name type="ordered locus">Dalk_1522</name>
</gene>
<feature type="chain" id="PRO_1000211863" description="Nitrogenase iron protein">
    <location>
        <begin position="1"/>
        <end position="274"/>
    </location>
</feature>
<feature type="binding site" evidence="1">
    <location>
        <begin position="8"/>
        <end position="15"/>
    </location>
    <ligand>
        <name>ATP</name>
        <dbReference type="ChEBI" id="CHEBI:30616"/>
    </ligand>
</feature>
<feature type="binding site" evidence="1">
    <location>
        <position position="94"/>
    </location>
    <ligand>
        <name>[4Fe-4S] cluster</name>
        <dbReference type="ChEBI" id="CHEBI:49883"/>
        <note>ligand shared between dimeric partners</note>
    </ligand>
</feature>
<feature type="binding site" evidence="1">
    <location>
        <position position="131"/>
    </location>
    <ligand>
        <name>[4Fe-4S] cluster</name>
        <dbReference type="ChEBI" id="CHEBI:49883"/>
        <note>ligand shared between dimeric partners</note>
    </ligand>
</feature>
<feature type="modified residue" description="ADP-ribosylarginine; by dinitrogenase reductase ADP-ribosyltransferase" evidence="1">
    <location>
        <position position="97"/>
    </location>
</feature>
<dbReference type="EC" id="1.18.6.1" evidence="1"/>
<dbReference type="EMBL" id="CP001322">
    <property type="protein sequence ID" value="ACL03220.1"/>
    <property type="molecule type" value="Genomic_DNA"/>
</dbReference>
<dbReference type="RefSeq" id="WP_012610655.1">
    <property type="nucleotide sequence ID" value="NC_011768.1"/>
</dbReference>
<dbReference type="SMR" id="B8FAC4"/>
<dbReference type="KEGG" id="dal:Dalk_1522"/>
<dbReference type="eggNOG" id="COG1348">
    <property type="taxonomic scope" value="Bacteria"/>
</dbReference>
<dbReference type="HOGENOM" id="CLU_059373_0_0_7"/>
<dbReference type="Proteomes" id="UP000000739">
    <property type="component" value="Chromosome"/>
</dbReference>
<dbReference type="GO" id="GO:0051539">
    <property type="term" value="F:4 iron, 4 sulfur cluster binding"/>
    <property type="evidence" value="ECO:0007669"/>
    <property type="project" value="UniProtKB-KW"/>
</dbReference>
<dbReference type="GO" id="GO:0005524">
    <property type="term" value="F:ATP binding"/>
    <property type="evidence" value="ECO:0007669"/>
    <property type="project" value="UniProtKB-UniRule"/>
</dbReference>
<dbReference type="GO" id="GO:0046872">
    <property type="term" value="F:metal ion binding"/>
    <property type="evidence" value="ECO:0007669"/>
    <property type="project" value="UniProtKB-KW"/>
</dbReference>
<dbReference type="GO" id="GO:0016163">
    <property type="term" value="F:nitrogenase activity"/>
    <property type="evidence" value="ECO:0007669"/>
    <property type="project" value="UniProtKB-UniRule"/>
</dbReference>
<dbReference type="GO" id="GO:0009399">
    <property type="term" value="P:nitrogen fixation"/>
    <property type="evidence" value="ECO:0007669"/>
    <property type="project" value="UniProtKB-UniRule"/>
</dbReference>
<dbReference type="CDD" id="cd02040">
    <property type="entry name" value="NifH"/>
    <property type="match status" value="1"/>
</dbReference>
<dbReference type="Gene3D" id="3.40.50.300">
    <property type="entry name" value="P-loop containing nucleotide triphosphate hydrolases"/>
    <property type="match status" value="1"/>
</dbReference>
<dbReference type="HAMAP" id="MF_00533">
    <property type="entry name" value="NifH"/>
    <property type="match status" value="1"/>
</dbReference>
<dbReference type="InterPro" id="IPR030655">
    <property type="entry name" value="NifH/chlL_CS"/>
</dbReference>
<dbReference type="InterPro" id="IPR000392">
    <property type="entry name" value="NifH/frxC"/>
</dbReference>
<dbReference type="InterPro" id="IPR005977">
    <property type="entry name" value="Nitrogenase_Fe_NifH"/>
</dbReference>
<dbReference type="InterPro" id="IPR027417">
    <property type="entry name" value="P-loop_NTPase"/>
</dbReference>
<dbReference type="NCBIfam" id="TIGR01287">
    <property type="entry name" value="nifH"/>
    <property type="match status" value="1"/>
</dbReference>
<dbReference type="PANTHER" id="PTHR42864">
    <property type="entry name" value="LIGHT-INDEPENDENT PROTOCHLOROPHYLLIDE REDUCTASE IRON-SULFUR ATP-BINDING PROTEIN"/>
    <property type="match status" value="1"/>
</dbReference>
<dbReference type="PANTHER" id="PTHR42864:SF2">
    <property type="entry name" value="LIGHT-INDEPENDENT PROTOCHLOROPHYLLIDE REDUCTASE IRON-SULFUR ATP-BINDING PROTEIN"/>
    <property type="match status" value="1"/>
</dbReference>
<dbReference type="Pfam" id="PF00142">
    <property type="entry name" value="Fer4_NifH"/>
    <property type="match status" value="1"/>
</dbReference>
<dbReference type="PIRSF" id="PIRSF000363">
    <property type="entry name" value="Nitrogenase_iron"/>
    <property type="match status" value="1"/>
</dbReference>
<dbReference type="PRINTS" id="PR00091">
    <property type="entry name" value="NITROGNASEII"/>
</dbReference>
<dbReference type="SUPFAM" id="SSF52540">
    <property type="entry name" value="P-loop containing nucleoside triphosphate hydrolases"/>
    <property type="match status" value="1"/>
</dbReference>
<dbReference type="PROSITE" id="PS00746">
    <property type="entry name" value="NIFH_FRXC_1"/>
    <property type="match status" value="1"/>
</dbReference>
<dbReference type="PROSITE" id="PS00692">
    <property type="entry name" value="NIFH_FRXC_2"/>
    <property type="match status" value="1"/>
</dbReference>
<dbReference type="PROSITE" id="PS51026">
    <property type="entry name" value="NIFH_FRXC_3"/>
    <property type="match status" value="1"/>
</dbReference>
<organism>
    <name type="scientific">Desulfatibacillum aliphaticivorans</name>
    <dbReference type="NCBI Taxonomy" id="218208"/>
    <lineage>
        <taxon>Bacteria</taxon>
        <taxon>Pseudomonadati</taxon>
        <taxon>Thermodesulfobacteriota</taxon>
        <taxon>Desulfobacteria</taxon>
        <taxon>Desulfobacterales</taxon>
        <taxon>Desulfatibacillaceae</taxon>
        <taxon>Desulfatibacillum</taxon>
    </lineage>
</organism>
<protein>
    <recommendedName>
        <fullName evidence="1">Nitrogenase iron protein</fullName>
        <ecNumber evidence="1">1.18.6.1</ecNumber>
    </recommendedName>
    <alternativeName>
        <fullName evidence="1">Nitrogenase Fe protein</fullName>
    </alternativeName>
    <alternativeName>
        <fullName evidence="1">Nitrogenase component II</fullName>
    </alternativeName>
    <alternativeName>
        <fullName evidence="1">Nitrogenase reductase</fullName>
    </alternativeName>
</protein>
<comment type="function">
    <text evidence="1">The key enzymatic reactions in nitrogen fixation are catalyzed by the nitrogenase complex, which has 2 components: the iron protein and the molybdenum-iron protein.</text>
</comment>
<comment type="catalytic activity">
    <reaction evidence="1">
        <text>N2 + 8 reduced [2Fe-2S]-[ferredoxin] + 16 ATP + 16 H2O = H2 + 8 oxidized [2Fe-2S]-[ferredoxin] + 2 NH4(+) + 16 ADP + 16 phosphate + 6 H(+)</text>
        <dbReference type="Rhea" id="RHEA:21448"/>
        <dbReference type="Rhea" id="RHEA-COMP:10000"/>
        <dbReference type="Rhea" id="RHEA-COMP:10001"/>
        <dbReference type="ChEBI" id="CHEBI:15377"/>
        <dbReference type="ChEBI" id="CHEBI:15378"/>
        <dbReference type="ChEBI" id="CHEBI:17997"/>
        <dbReference type="ChEBI" id="CHEBI:18276"/>
        <dbReference type="ChEBI" id="CHEBI:28938"/>
        <dbReference type="ChEBI" id="CHEBI:30616"/>
        <dbReference type="ChEBI" id="CHEBI:33737"/>
        <dbReference type="ChEBI" id="CHEBI:33738"/>
        <dbReference type="ChEBI" id="CHEBI:43474"/>
        <dbReference type="ChEBI" id="CHEBI:456216"/>
        <dbReference type="EC" id="1.18.6.1"/>
    </reaction>
</comment>
<comment type="cofactor">
    <cofactor evidence="1">
        <name>[4Fe-4S] cluster</name>
        <dbReference type="ChEBI" id="CHEBI:49883"/>
    </cofactor>
    <text evidence="1">Binds 1 [4Fe-4S] cluster per dimer.</text>
</comment>
<comment type="subunit">
    <text evidence="1">Homodimer.</text>
</comment>
<comment type="PTM">
    <text evidence="1">The reversible ADP-ribosylation of Arg-97 inactivates the nitrogenase reductase and regulates nitrogenase activity.</text>
</comment>
<comment type="similarity">
    <text evidence="1">Belongs to the NifH/BchL/ChlL family.</text>
</comment>
<evidence type="ECO:0000255" key="1">
    <source>
        <dbReference type="HAMAP-Rule" id="MF_00533"/>
    </source>
</evidence>
<keyword id="KW-0004">4Fe-4S</keyword>
<keyword id="KW-0013">ADP-ribosylation</keyword>
<keyword id="KW-0067">ATP-binding</keyword>
<keyword id="KW-0408">Iron</keyword>
<keyword id="KW-0411">Iron-sulfur</keyword>
<keyword id="KW-0479">Metal-binding</keyword>
<keyword id="KW-0535">Nitrogen fixation</keyword>
<keyword id="KW-0547">Nucleotide-binding</keyword>
<keyword id="KW-0560">Oxidoreductase</keyword>
<keyword id="KW-1185">Reference proteome</keyword>
<proteinExistence type="inferred from homology"/>
<accession>B8FAC4</accession>
<name>NIFH_DESAL</name>
<reference key="1">
    <citation type="journal article" date="2012" name="Environ. Microbiol.">
        <title>The genome sequence of Desulfatibacillum alkenivorans AK-01: a blueprint for anaerobic alkane oxidation.</title>
        <authorList>
            <person name="Callaghan A.V."/>
            <person name="Morris B.E."/>
            <person name="Pereira I.A."/>
            <person name="McInerney M.J."/>
            <person name="Austin R.N."/>
            <person name="Groves J.T."/>
            <person name="Kukor J.J."/>
            <person name="Suflita J.M."/>
            <person name="Young L.Y."/>
            <person name="Zylstra G.J."/>
            <person name="Wawrik B."/>
        </authorList>
    </citation>
    <scope>NUCLEOTIDE SEQUENCE [LARGE SCALE GENOMIC DNA]</scope>
    <source>
        <strain>AK-01</strain>
    </source>
</reference>